<proteinExistence type="inferred from homology"/>
<name>SYL_METMA</name>
<feature type="chain" id="PRO_0000152133" description="Leucine--tRNA ligase">
    <location>
        <begin position="1"/>
        <end position="966"/>
    </location>
</feature>
<feature type="short sequence motif" description="'HIGH' region">
    <location>
        <begin position="41"/>
        <end position="51"/>
    </location>
</feature>
<feature type="short sequence motif" description="'KMSKS' region">
    <location>
        <begin position="632"/>
        <end position="636"/>
    </location>
</feature>
<feature type="binding site" evidence="1">
    <location>
        <position position="635"/>
    </location>
    <ligand>
        <name>ATP</name>
        <dbReference type="ChEBI" id="CHEBI:30616"/>
    </ligand>
</feature>
<accession>Q8Q054</accession>
<reference key="1">
    <citation type="journal article" date="2002" name="J. Mol. Microbiol. Biotechnol.">
        <title>The genome of Methanosarcina mazei: evidence for lateral gene transfer between Bacteria and Archaea.</title>
        <authorList>
            <person name="Deppenmeier U."/>
            <person name="Johann A."/>
            <person name="Hartsch T."/>
            <person name="Merkl R."/>
            <person name="Schmitz R.A."/>
            <person name="Martinez-Arias R."/>
            <person name="Henne A."/>
            <person name="Wiezer A."/>
            <person name="Baeumer S."/>
            <person name="Jacobi C."/>
            <person name="Brueggemann H."/>
            <person name="Lienard T."/>
            <person name="Christmann A."/>
            <person name="Boemecke M."/>
            <person name="Steckel S."/>
            <person name="Bhattacharyya A."/>
            <person name="Lykidis A."/>
            <person name="Overbeek R."/>
            <person name="Klenk H.-P."/>
            <person name="Gunsalus R.P."/>
            <person name="Fritz H.-J."/>
            <person name="Gottschalk G."/>
        </authorList>
    </citation>
    <scope>NUCLEOTIDE SEQUENCE [LARGE SCALE GENOMIC DNA]</scope>
    <source>
        <strain>ATCC BAA-159 / DSM 3647 / Goe1 / Go1 / JCM 11833 / OCM 88</strain>
    </source>
</reference>
<organism>
    <name type="scientific">Methanosarcina mazei (strain ATCC BAA-159 / DSM 3647 / Goe1 / Go1 / JCM 11833 / OCM 88)</name>
    <name type="common">Methanosarcina frisia</name>
    <dbReference type="NCBI Taxonomy" id="192952"/>
    <lineage>
        <taxon>Archaea</taxon>
        <taxon>Methanobacteriati</taxon>
        <taxon>Methanobacteriota</taxon>
        <taxon>Stenosarchaea group</taxon>
        <taxon>Methanomicrobia</taxon>
        <taxon>Methanosarcinales</taxon>
        <taxon>Methanosarcinaceae</taxon>
        <taxon>Methanosarcina</taxon>
    </lineage>
</organism>
<keyword id="KW-0030">Aminoacyl-tRNA synthetase</keyword>
<keyword id="KW-0067">ATP-binding</keyword>
<keyword id="KW-0963">Cytoplasm</keyword>
<keyword id="KW-0436">Ligase</keyword>
<keyword id="KW-0547">Nucleotide-binding</keyword>
<keyword id="KW-0648">Protein biosynthesis</keyword>
<gene>
    <name evidence="1" type="primary">leuS</name>
    <name type="ordered locus">MM_0283</name>
</gene>
<comment type="catalytic activity">
    <reaction evidence="1">
        <text>tRNA(Leu) + L-leucine + ATP = L-leucyl-tRNA(Leu) + AMP + diphosphate</text>
        <dbReference type="Rhea" id="RHEA:11688"/>
        <dbReference type="Rhea" id="RHEA-COMP:9613"/>
        <dbReference type="Rhea" id="RHEA-COMP:9622"/>
        <dbReference type="ChEBI" id="CHEBI:30616"/>
        <dbReference type="ChEBI" id="CHEBI:33019"/>
        <dbReference type="ChEBI" id="CHEBI:57427"/>
        <dbReference type="ChEBI" id="CHEBI:78442"/>
        <dbReference type="ChEBI" id="CHEBI:78494"/>
        <dbReference type="ChEBI" id="CHEBI:456215"/>
        <dbReference type="EC" id="6.1.1.4"/>
    </reaction>
</comment>
<comment type="subcellular location">
    <subcellularLocation>
        <location evidence="1">Cytoplasm</location>
    </subcellularLocation>
</comment>
<comment type="similarity">
    <text evidence="1">Belongs to the class-I aminoacyl-tRNA synthetase family.</text>
</comment>
<comment type="sequence caution" evidence="2">
    <conflict type="erroneous initiation">
        <sequence resource="EMBL-CDS" id="AAM29979"/>
    </conflict>
</comment>
<protein>
    <recommendedName>
        <fullName evidence="1">Leucine--tRNA ligase</fullName>
        <ecNumber evidence="1">6.1.1.4</ecNumber>
    </recommendedName>
    <alternativeName>
        <fullName evidence="1">Leucyl-tRNA synthetase</fullName>
        <shortName evidence="1">LeuRS</shortName>
    </alternativeName>
</protein>
<sequence>MEQDYKPHEIENKWQKKWNESRIFQAEPDKREKFFITIPYPYLNGNLHAGHTRTFTIGDVVARHKRMLGYNVLYPMGFHVTGTPIVGLAELIASRDPQTMDVYERLHGIPGDILPALDTPEKIVDYFKVEAEKAMRMIGYSIDWRRKFTTTDPTYKKFIEWQYTRLEEKDLIVKGSHPVKWCPNDNNPVEDHDILHGEEATIVEYTLIKFRYRDLVLPCATLRPETTYGVTNLWVNPNVDYVKARVEKDGNVEFWVVSRDAFRKLTFTDRTVEYVEDMPAKSIIGIKLTNPVTGDEVISLPASFVKPENGSGIVMSVPAHAPFDYLALRDLYDADLSEYGITEDLRKIELISLIQVPEFGEFPAKEIVESMGISDQKDPKAEEATKIVYRREFHGGVLKELTGKYKGYPVSKIKDILTRDFLASNAGETFYEFSEPVVCRCGTPCVVNMVKGQWFLNYSNPDWKAKVYKCLGQMRVIPTEYRVEFENKIDWLKDKACARRKGLGTRLPFDKEWLIESLGDSTIYMSYYIIARFIEKGELALEHLTLSFFDYVLLGKGDSAAVSAETGLKPELIEEIRSHFNYWYPVDLRSSGKDLVPNHLLFFLFHHVALFEEEKWPKALAVNGFVSLEGQKMSKSKGPILTLESAVSSYGADITRMYILSTAEQTQDADWQKAGIDSARRQVDRFYAFAKDVIESGKRGTLSAELKQIDRWMLSRMQNYIKETNAALDSIQTREAIQNSFFLLINDVRWYQRRGGEALLYYVLDNWVRLMAPFTPHLCEEVWEAMGHEDPVSLAQYPLYNEDLIDNGAELSEEAVKSTLNDIEEIIRVTKMTPQKVYLYTAPAWKAEAIRCACGLQVEAPLEVGTLIKTLMAKPELKRFGKEIPKFVQKIVPEFKSGGAERYETFAYLGLDEKDLLKESASFLEKEIGCPVEIQSADSPEYDPQKKSRFAEPLRPAIYIEEKKEE</sequence>
<dbReference type="EC" id="6.1.1.4" evidence="1"/>
<dbReference type="EMBL" id="AE008384">
    <property type="protein sequence ID" value="AAM29979.1"/>
    <property type="status" value="ALT_INIT"/>
    <property type="molecule type" value="Genomic_DNA"/>
</dbReference>
<dbReference type="RefSeq" id="WP_048038036.1">
    <property type="nucleotide sequence ID" value="NC_003901.1"/>
</dbReference>
<dbReference type="SMR" id="Q8Q054"/>
<dbReference type="GeneID" id="44086522"/>
<dbReference type="KEGG" id="mma:MM_0283"/>
<dbReference type="PATRIC" id="fig|192952.21.peg.347"/>
<dbReference type="eggNOG" id="arCOG00809">
    <property type="taxonomic scope" value="Archaea"/>
</dbReference>
<dbReference type="HOGENOM" id="CLU_004174_0_0_2"/>
<dbReference type="Proteomes" id="UP000000595">
    <property type="component" value="Chromosome"/>
</dbReference>
<dbReference type="GO" id="GO:0005737">
    <property type="term" value="C:cytoplasm"/>
    <property type="evidence" value="ECO:0007669"/>
    <property type="project" value="UniProtKB-SubCell"/>
</dbReference>
<dbReference type="GO" id="GO:0002161">
    <property type="term" value="F:aminoacyl-tRNA deacylase activity"/>
    <property type="evidence" value="ECO:0007669"/>
    <property type="project" value="InterPro"/>
</dbReference>
<dbReference type="GO" id="GO:0005524">
    <property type="term" value="F:ATP binding"/>
    <property type="evidence" value="ECO:0007669"/>
    <property type="project" value="UniProtKB-UniRule"/>
</dbReference>
<dbReference type="GO" id="GO:0004823">
    <property type="term" value="F:leucine-tRNA ligase activity"/>
    <property type="evidence" value="ECO:0007669"/>
    <property type="project" value="UniProtKB-UniRule"/>
</dbReference>
<dbReference type="GO" id="GO:0006429">
    <property type="term" value="P:leucyl-tRNA aminoacylation"/>
    <property type="evidence" value="ECO:0007669"/>
    <property type="project" value="UniProtKB-UniRule"/>
</dbReference>
<dbReference type="CDD" id="cd07959">
    <property type="entry name" value="Anticodon_Ia_Leu_AEc"/>
    <property type="match status" value="1"/>
</dbReference>
<dbReference type="FunFam" id="1.10.730.10:FF:000051">
    <property type="entry name" value="Leucine--tRNA ligase"/>
    <property type="match status" value="1"/>
</dbReference>
<dbReference type="FunFam" id="3.90.740.10:FF:000024">
    <property type="entry name" value="Leucine--tRNA ligase"/>
    <property type="match status" value="1"/>
</dbReference>
<dbReference type="Gene3D" id="3.30.2320.20">
    <property type="entry name" value="Class I aminoacyl-tRNA synthetases (RS)"/>
    <property type="match status" value="1"/>
</dbReference>
<dbReference type="Gene3D" id="3.40.50.620">
    <property type="entry name" value="HUPs"/>
    <property type="match status" value="1"/>
</dbReference>
<dbReference type="Gene3D" id="1.10.730.10">
    <property type="entry name" value="Isoleucyl-tRNA Synthetase, Domain 1"/>
    <property type="match status" value="1"/>
</dbReference>
<dbReference type="Gene3D" id="1.10.10.720">
    <property type="entry name" value="leucyl-tRNA synthetase"/>
    <property type="match status" value="1"/>
</dbReference>
<dbReference type="Gene3D" id="3.90.740.10">
    <property type="entry name" value="Valyl/Leucyl/Isoleucyl-tRNA synthetase, editing domain"/>
    <property type="match status" value="1"/>
</dbReference>
<dbReference type="HAMAP" id="MF_00049_A">
    <property type="entry name" value="Leu_tRNA_synth_A"/>
    <property type="match status" value="1"/>
</dbReference>
<dbReference type="InterPro" id="IPR001412">
    <property type="entry name" value="aa-tRNA-synth_I_CS"/>
</dbReference>
<dbReference type="InterPro" id="IPR002300">
    <property type="entry name" value="aa-tRNA-synth_Ia"/>
</dbReference>
<dbReference type="InterPro" id="IPR020791">
    <property type="entry name" value="Leu-tRNA-lgase_arc"/>
</dbReference>
<dbReference type="InterPro" id="IPR004493">
    <property type="entry name" value="Leu-tRNA-synth_Ia_arc/euk"/>
</dbReference>
<dbReference type="InterPro" id="IPR013155">
    <property type="entry name" value="M/V/L/I-tRNA-synth_anticd-bd"/>
</dbReference>
<dbReference type="InterPro" id="IPR014729">
    <property type="entry name" value="Rossmann-like_a/b/a_fold"/>
</dbReference>
<dbReference type="InterPro" id="IPR009080">
    <property type="entry name" value="tRNAsynth_Ia_anticodon-bd"/>
</dbReference>
<dbReference type="InterPro" id="IPR009008">
    <property type="entry name" value="Val/Leu/Ile-tRNA-synth_edit"/>
</dbReference>
<dbReference type="NCBIfam" id="TIGR00395">
    <property type="entry name" value="leuS_arch"/>
    <property type="match status" value="1"/>
</dbReference>
<dbReference type="NCBIfam" id="NF008957">
    <property type="entry name" value="PRK12300.1"/>
    <property type="match status" value="1"/>
</dbReference>
<dbReference type="PANTHER" id="PTHR45794:SF1">
    <property type="entry name" value="LEUCINE--TRNA LIGASE, CYTOPLASMIC"/>
    <property type="match status" value="1"/>
</dbReference>
<dbReference type="PANTHER" id="PTHR45794">
    <property type="entry name" value="LEUCYL-TRNA SYNTHETASE"/>
    <property type="match status" value="1"/>
</dbReference>
<dbReference type="Pfam" id="PF08264">
    <property type="entry name" value="Anticodon_1"/>
    <property type="match status" value="1"/>
</dbReference>
<dbReference type="Pfam" id="PF00133">
    <property type="entry name" value="tRNA-synt_1"/>
    <property type="match status" value="1"/>
</dbReference>
<dbReference type="SUPFAM" id="SSF47323">
    <property type="entry name" value="Anticodon-binding domain of a subclass of class I aminoacyl-tRNA synthetases"/>
    <property type="match status" value="1"/>
</dbReference>
<dbReference type="SUPFAM" id="SSF52374">
    <property type="entry name" value="Nucleotidylyl transferase"/>
    <property type="match status" value="1"/>
</dbReference>
<dbReference type="SUPFAM" id="SSF50677">
    <property type="entry name" value="ValRS/IleRS/LeuRS editing domain"/>
    <property type="match status" value="1"/>
</dbReference>
<dbReference type="PROSITE" id="PS00178">
    <property type="entry name" value="AA_TRNA_LIGASE_I"/>
    <property type="match status" value="1"/>
</dbReference>
<evidence type="ECO:0000255" key="1">
    <source>
        <dbReference type="HAMAP-Rule" id="MF_00049"/>
    </source>
</evidence>
<evidence type="ECO:0000305" key="2"/>